<name>WDR81_HUMAN</name>
<evidence type="ECO:0000250" key="1">
    <source>
        <dbReference type="UniProtKB" id="Q5ND34"/>
    </source>
</evidence>
<evidence type="ECO:0000255" key="2">
    <source>
        <dbReference type="PROSITE-ProRule" id="PRU00026"/>
    </source>
</evidence>
<evidence type="ECO:0000256" key="3">
    <source>
        <dbReference type="SAM" id="MobiDB-lite"/>
    </source>
</evidence>
<evidence type="ECO:0000269" key="4">
    <source>
    </source>
</evidence>
<evidence type="ECO:0000269" key="5">
    <source>
    </source>
</evidence>
<evidence type="ECO:0000269" key="6">
    <source>
    </source>
</evidence>
<evidence type="ECO:0000269" key="7">
    <source>
    </source>
</evidence>
<evidence type="ECO:0000269" key="8">
    <source>
    </source>
</evidence>
<evidence type="ECO:0000269" key="9">
    <source>
    </source>
</evidence>
<evidence type="ECO:0000269" key="10">
    <source>
    </source>
</evidence>
<evidence type="ECO:0000303" key="11">
    <source>
    </source>
</evidence>
<evidence type="ECO:0000303" key="12">
    <source>
    </source>
</evidence>
<evidence type="ECO:0000305" key="13"/>
<evidence type="ECO:0000312" key="14">
    <source>
        <dbReference type="HGNC" id="HGNC:26600"/>
    </source>
</evidence>
<sequence>MAQGSGGREGALRTPAGGWHSPPSPDMQELLRSVERDLSIDPRQLAPAPGGTHVVALVPARWLASLRDRRLPLGPCPRAEGLGEAEVRTLLQRSVQRLPAGWTRVEVHGLRKRRLSYPLGGGLPFEDGSCGPETLTRFMQEVAAQNYRNLWRHAYHTYGQPYSHSPAPSAVPALDSVRQALQRVYGCSFLPVGETTQCPSYAREGPCPPRGSPACPSLLRAEALLESPEMLYVVHPYVQFSLHDVVTFSPAKLTNSQAKVLFILFRVLRAMDACHRQGLACGALSLYHIAVDEKLCSELRLDLSAYERPEEDENEEAPVARDEAGIVSQEEQGGQPGQPTGQEELRSLVLDWVHGRISNFHYLMQLNRLAGRRQGDPNYHPVLPWVVDFTTPHGRFRDLRKSKFRLNKGDKQLDFTYEMTRQAFVAGGAGGGEPPHVPHHISDVLSDITYYVYKARRTPRSVLCGHVRAQWEPHEYPASMERMQNWTPDECIPEFYTDPSIFRSIHPDMPDLDVPAWCSSSQEFVAAHRALLESREVSRDLHHWIDLTFGYKLQGKEAVKEKNVCLHLVDAHTHLASYGVVQLFDQPHPQRLAGAPALAPEPPLIPKLLVQTIQETTGREDFTENPGQLPNGVGRPVLEATPCEASWTRDRPVAGEDDLEQATEALDSISLAGKAGDQLGSSSQASPGLLSFSVASASRPGRRNKAAGADPGEGEEGRILLPEGFNPMQALEELEKTGNFLAKGLGGLLEVPEQPRVQPAVPLQCLLHRDMQALGVLLAEMVFATRVRTLQPDAPLWVRFQAVRGLCTRHPKEVPVSLQPVLDTLLQMSGPEVPMGAERGKLDQLFEYRPVSQGLPPPCPSQLLSPFSSVVPFPPYFPALHRFILLYQARRVEDEAQGRELVFALWQQLGAVLKDITPEGLEILLPFVLSLMSEEHTAVYTAWYLFEPVAKALGPKNANKYLLKPLIGAYESPCQLHGRFYLYTDCFVAQLMVRLGLQAFLTHLLPHVLQVLAGAEASQEESKDLAGAAEEEESGLPGAGPGSCAFGEEIPMDGEPPASSGLGLPDYTSGVSFHDQADLPETEDFQAGLYVTESPQPQEAEAVSLGRLSDKSSTSETSLGEERAPDEGGAPVDKSSLRSGDSSQDLKQSEGSEEEEEEEDSCVVLEEEEGEQEEVTGASELTLSDTVLSMETVVAGGSGGDGEEEEEALPEQSEGKEQKILLDTACKMVRWLSAKLGPTVASRHVARNLLRLLTSCYVGPTRQQFTVSSGESPPLSAGNIYQKRPVLGDIVSGPVLSCLLHIARLYGEPVLTYQYLPYISYLVAPGSASGPSRLNSRKEAGLLAAVTLTQKIIVYLSDTTLMDILPRISHEVLLPVLSFLTSLVTGFPSGAQARTILCVKTISLIALICLRIGQEMVQQHLSEPVATFFQVFSQLHELRQQDLKLDPAGRGEGQLPQVVFSDGQQRPVDPALLDELQKVFTLEMAYTIYVPFSCLLGDIIRKIIPNHELVGELAALYLESISPSSRNPASVEPTMPGTGPEWDPHGGGCPQDDGHSGTFGSVLVGNRIQIPNDSRPENPGPLGPISGVGGGGLGSGSDDNALKQELPRSVHGLSGNWLAYWQYEIGVSQQDAHFHFHQIRLQSFPGHSGAVKCVAPLSSEDFFLSGSKDRTVRLWPLYNYGDGTSETAPRLVYTQHRKSVFFVGQLEAPQHVVSCDGAVHVWDPFTGKTLRTVEPLDSRVPLTAVAVMPAPHTSITMASSDSTLRFVDCRKPGLQHEFRLGGGLNPGLVRALAISPSGRSVVAGFSSGFMVLLDTRTGLVLRGWPAHEGDILQIKAVEGSVLVSSSSDHSLTVWKELEQKPTHHYKSASDPIHTFDLYGSEVVTGTVSNKIGVCSLLEPPSQATTKLSSENFRGTLTSLALLPTKRHLLLGSDNGVIRLLA</sequence>
<protein>
    <recommendedName>
        <fullName evidence="14">WD repeat-containing protein 81</fullName>
    </recommendedName>
</protein>
<comment type="function">
    <text evidence="1 7 8 9">Functions as a negative regulator of the PI3 kinase/PI3K activity associated with endosomal membranes via BECN1, a core subunit of the PI3K complex. By modifying the phosphatidylinositol 3-phosphate/PtdInsP3 content of endosomal membranes may regulate endosome fusion, recycling, sorting and early to late endosome transport (PubMed:26783301). It is for instance, required for the delivery of cargos like BST2/tetherin from early to late endosome and thereby participates indirectly to their degradation by the lysosome (PubMed:27126989). May also play a role in aggrephagy, the macroautophagic degradation of ubiquitinated protein aggregates. In this process, may regulate the interaction of SQSTM1 with ubiquitinated proteins and also recruit MAP1LC3C (PubMed:28404643). May also be involved in maintenance of normal mitochondrial structure and organization (By similarity).</text>
</comment>
<comment type="subunit">
    <text evidence="7 8 9">Interacts with WDR91; involved in early to late endosome cargo transport (PubMed:26783301, PubMed:27126989). Interacts with BECN1; negatively regulates the PI3 kinase/PI3K activity associated with endosomal membranes (PubMed:26783301). Interacts with SQSTM1; the interaction is direct and regulates the interaction of SQSTM1 with ubiquitinated proteins (PubMed:28404643). Interacts with MAP1LC3C; recruits MAP1LC3C to ubiquitinated protein aggregates in the aggrephagy process (PubMed:28404643).</text>
</comment>
<comment type="interaction">
    <interactant intactId="EBI-5235360">
        <id>Q562E7</id>
    </interactant>
    <interactant intactId="EBI-718046">
        <id>A4D1P6</id>
        <label>WDR91</label>
    </interactant>
    <organismsDiffer>false</organismsDiffer>
    <experiments>3</experiments>
</comment>
<comment type="subcellular location">
    <subcellularLocation>
        <location evidence="7 8">Early endosome membrane</location>
        <topology evidence="7 8">Peripheral membrane protein</topology>
    </subcellularLocation>
    <subcellularLocation>
        <location evidence="7 8 9">Late endosome membrane</location>
    </subcellularLocation>
    <subcellularLocation>
        <location evidence="8">Lysosome membrane</location>
    </subcellularLocation>
    <subcellularLocation>
        <location evidence="9">Cytoplasmic vesicle</location>
        <location evidence="9">Autophagosome membrane</location>
    </subcellularLocation>
    <subcellularLocation>
        <location evidence="9">Mitochondrion</location>
    </subcellularLocation>
    <subcellularLocation>
        <location evidence="8">Cytoplasm</location>
        <location evidence="8">Cytosol</location>
    </subcellularLocation>
</comment>
<comment type="alternative products">
    <event type="alternative splicing"/>
    <isoform>
        <id>Q562E7-1</id>
        <name>1</name>
        <sequence type="displayed"/>
    </isoform>
    <isoform>
        <id>Q562E7-2</id>
        <name>2</name>
        <sequence type="described" ref="VSP_044065 VSP_019955"/>
    </isoform>
    <isoform>
        <id>Q562E7-3</id>
        <name>3</name>
        <sequence type="described" ref="VSP_044065"/>
    </isoform>
    <isoform>
        <id>Q562E7-4</id>
        <name>4</name>
        <sequence type="described" ref="VSP_044067"/>
    </isoform>
    <isoform>
        <id>Q562E7-5</id>
        <name>5</name>
        <sequence type="described" ref="VSP_044064 VSP_044066"/>
    </isoform>
    <isoform>
        <id>Q562E7-6</id>
        <name>6</name>
        <sequence type="described" ref="VSP_044063"/>
    </isoform>
</comment>
<comment type="tissue specificity">
    <text evidence="5">Widely expressed. In the brain, highest levels in cerebellum and corpus callosum.</text>
</comment>
<comment type="disease" evidence="5 6">
    <disease id="DI-03450">
        <name>Cerebellar ataxia, impaired intellectual development, and dysequilibrium syndrome 2</name>
        <acronym>CAMRQ2</acronym>
        <description>An autosomal recessive, congenital cerebellar ataxia associated with cerebellar hypoplasia, intellectual disability, and inability to walk bipedally, resulting in quadrupedal locomotion as a functional adaptation. Additional findings include generalized brain atrophy and mild hypoplasia of the corpus callosum.</description>
        <dbReference type="MIM" id="610185"/>
    </disease>
    <text>The disease is caused by variants affecting the gene represented in this entry.</text>
</comment>
<comment type="disease" evidence="10">
    <disease id="DI-05285">
        <name>Hydrocephalus, congenital, 3, with brain anomalies</name>
        <acronym>HYC3</acronym>
        <description>A form of congenital hydrocephalus, a disease characterized by onset in utero of enlarged ventricles due to accumulation of ventricular cerebrospinal fluid. HYC3 features include enlarged ventricles, hypoplastic or absent cerebellum, holoprosencephaly and Dandy-Walker malformation. Most patients die in utero or shortly after birth. HYC3 inheritance is autosomal recessive.</description>
        <dbReference type="MIM" id="617967"/>
    </disease>
    <text>The disease is caused by variants affecting the gene represented in this entry.</text>
</comment>
<comment type="similarity">
    <text evidence="13">Belongs to the WD repeat WDR81 family.</text>
</comment>
<comment type="sequence caution" evidence="13">
    <conflict type="erroneous initiation">
        <sequence resource="EMBL-CDS" id="BAG53978"/>
    </conflict>
    <text>Truncated N-terminus.</text>
</comment>
<organism>
    <name type="scientific">Homo sapiens</name>
    <name type="common">Human</name>
    <dbReference type="NCBI Taxonomy" id="9606"/>
    <lineage>
        <taxon>Eukaryota</taxon>
        <taxon>Metazoa</taxon>
        <taxon>Chordata</taxon>
        <taxon>Craniata</taxon>
        <taxon>Vertebrata</taxon>
        <taxon>Euteleostomi</taxon>
        <taxon>Mammalia</taxon>
        <taxon>Eutheria</taxon>
        <taxon>Euarchontoglires</taxon>
        <taxon>Primates</taxon>
        <taxon>Haplorrhini</taxon>
        <taxon>Catarrhini</taxon>
        <taxon>Hominidae</taxon>
        <taxon>Homo</taxon>
    </lineage>
</organism>
<dbReference type="EMBL" id="AK074111">
    <property type="protein sequence ID" value="BAB84937.1"/>
    <property type="molecule type" value="mRNA"/>
</dbReference>
<dbReference type="EMBL" id="AK091136">
    <property type="protein sequence ID" value="BAC03593.1"/>
    <property type="molecule type" value="mRNA"/>
</dbReference>
<dbReference type="EMBL" id="AK123896">
    <property type="protein sequence ID" value="BAG53978.1"/>
    <property type="status" value="ALT_INIT"/>
    <property type="molecule type" value="mRNA"/>
</dbReference>
<dbReference type="EMBL" id="AK127946">
    <property type="protein sequence ID" value="BAG54603.1"/>
    <property type="molecule type" value="mRNA"/>
</dbReference>
<dbReference type="EMBL" id="AK298567">
    <property type="protein sequence ID" value="BAH12815.1"/>
    <property type="molecule type" value="mRNA"/>
</dbReference>
<dbReference type="EMBL" id="AC130343">
    <property type="status" value="NOT_ANNOTATED_CDS"/>
    <property type="molecule type" value="Genomic_DNA"/>
</dbReference>
<dbReference type="EMBL" id="BC092513">
    <property type="protein sequence ID" value="AAH92513.1"/>
    <property type="molecule type" value="mRNA"/>
</dbReference>
<dbReference type="EMBL" id="BC114568">
    <property type="protein sequence ID" value="AAI14569.1"/>
    <property type="molecule type" value="mRNA"/>
</dbReference>
<dbReference type="EMBL" id="AL834379">
    <property type="protein sequence ID" value="CAD39042.1"/>
    <property type="molecule type" value="mRNA"/>
</dbReference>
<dbReference type="CCDS" id="CCDS54061.1">
    <molecule id="Q562E7-5"/>
</dbReference>
<dbReference type="CCDS" id="CCDS54062.1">
    <molecule id="Q562E7-1"/>
</dbReference>
<dbReference type="CCDS" id="CCDS54063.1">
    <molecule id="Q562E7-6"/>
</dbReference>
<dbReference type="RefSeq" id="NP_001157145.1">
    <molecule id="Q562E7-5"/>
    <property type="nucleotide sequence ID" value="NM_001163673.2"/>
</dbReference>
<dbReference type="RefSeq" id="NP_001157281.1">
    <molecule id="Q562E7-1"/>
    <property type="nucleotide sequence ID" value="NM_001163809.2"/>
</dbReference>
<dbReference type="RefSeq" id="NP_001157283.1">
    <molecule id="Q562E7-6"/>
    <property type="nucleotide sequence ID" value="NM_001163811.2"/>
</dbReference>
<dbReference type="RefSeq" id="NP_689561.2">
    <molecule id="Q562E7-3"/>
    <property type="nucleotide sequence ID" value="NM_152348.4"/>
</dbReference>
<dbReference type="RefSeq" id="XP_011521953.1">
    <molecule id="Q562E7-3"/>
    <property type="nucleotide sequence ID" value="XM_011523651.3"/>
</dbReference>
<dbReference type="SMR" id="Q562E7"/>
<dbReference type="BioGRID" id="125911">
    <property type="interactions" value="41"/>
</dbReference>
<dbReference type="FunCoup" id="Q562E7">
    <property type="interactions" value="1561"/>
</dbReference>
<dbReference type="IntAct" id="Q562E7">
    <property type="interactions" value="24"/>
</dbReference>
<dbReference type="STRING" id="9606.ENSP00000386609"/>
<dbReference type="GlyGen" id="Q562E7">
    <property type="glycosylation" value="2 sites"/>
</dbReference>
<dbReference type="iPTMnet" id="Q562E7"/>
<dbReference type="PhosphoSitePlus" id="Q562E7"/>
<dbReference type="SwissPalm" id="Q562E7"/>
<dbReference type="BioMuta" id="WDR81"/>
<dbReference type="DMDM" id="403314383"/>
<dbReference type="jPOST" id="Q562E7"/>
<dbReference type="MassIVE" id="Q562E7"/>
<dbReference type="PaxDb" id="9606-ENSP00000386609"/>
<dbReference type="PeptideAtlas" id="Q562E7"/>
<dbReference type="ProteomicsDB" id="20529"/>
<dbReference type="ProteomicsDB" id="62557">
    <molecule id="Q562E7-1"/>
</dbReference>
<dbReference type="ProteomicsDB" id="62558">
    <molecule id="Q562E7-2"/>
</dbReference>
<dbReference type="Pumba" id="Q562E7"/>
<dbReference type="Antibodypedia" id="10606">
    <property type="antibodies" value="17 antibodies from 10 providers"/>
</dbReference>
<dbReference type="DNASU" id="124997"/>
<dbReference type="Ensembl" id="ENST00000309182.9">
    <molecule id="Q562E7-3"/>
    <property type="protein sequence ID" value="ENSP00000312074.5"/>
    <property type="gene ID" value="ENSG00000167716.19"/>
</dbReference>
<dbReference type="Ensembl" id="ENST00000409644.6">
    <molecule id="Q562E7-1"/>
    <property type="protein sequence ID" value="ENSP00000386609.1"/>
    <property type="gene ID" value="ENSG00000167716.19"/>
</dbReference>
<dbReference type="Ensembl" id="ENST00000419248.5">
    <molecule id="Q562E7-6"/>
    <property type="protein sequence ID" value="ENSP00000407845.1"/>
    <property type="gene ID" value="ENSG00000167716.19"/>
</dbReference>
<dbReference type="Ensembl" id="ENST00000437219.6">
    <molecule id="Q562E7-5"/>
    <property type="protein sequence ID" value="ENSP00000391074.2"/>
    <property type="gene ID" value="ENSG00000167716.19"/>
</dbReference>
<dbReference type="Ensembl" id="ENST00000611758.2">
    <molecule id="Q562E7-3"/>
    <property type="protein sequence ID" value="ENSP00000480442.1"/>
    <property type="gene ID" value="ENSG00000276021.4"/>
</dbReference>
<dbReference type="Ensembl" id="ENST00000613381.4">
    <molecule id="Q562E7-6"/>
    <property type="protein sequence ID" value="ENSP00000480101.1"/>
    <property type="gene ID" value="ENSG00000276021.4"/>
</dbReference>
<dbReference type="Ensembl" id="ENST00000613616.3">
    <molecule id="Q562E7-5"/>
    <property type="protein sequence ID" value="ENSP00000477991.1"/>
    <property type="gene ID" value="ENSG00000276021.4"/>
</dbReference>
<dbReference type="GeneID" id="124997"/>
<dbReference type="KEGG" id="hsa:124997"/>
<dbReference type="MANE-Select" id="ENST00000409644.6">
    <property type="protein sequence ID" value="ENSP00000386609.1"/>
    <property type="RefSeq nucleotide sequence ID" value="NM_001163809.2"/>
    <property type="RefSeq protein sequence ID" value="NP_001157281.1"/>
</dbReference>
<dbReference type="UCSC" id="uc002fth.3">
    <molecule id="Q562E7-1"/>
    <property type="organism name" value="human"/>
</dbReference>
<dbReference type="AGR" id="HGNC:26600"/>
<dbReference type="CTD" id="124997"/>
<dbReference type="DisGeNET" id="124997"/>
<dbReference type="GeneCards" id="WDR81"/>
<dbReference type="HGNC" id="HGNC:26600">
    <property type="gene designation" value="WDR81"/>
</dbReference>
<dbReference type="HPA" id="ENSG00000167716">
    <property type="expression patterns" value="Low tissue specificity"/>
</dbReference>
<dbReference type="MalaCards" id="WDR81"/>
<dbReference type="MIM" id="610185">
    <property type="type" value="phenotype"/>
</dbReference>
<dbReference type="MIM" id="614218">
    <property type="type" value="gene"/>
</dbReference>
<dbReference type="MIM" id="617967">
    <property type="type" value="phenotype"/>
</dbReference>
<dbReference type="neXtProt" id="NX_Q562E7"/>
<dbReference type="NIAGADS" id="ENSG00000167716"/>
<dbReference type="OpenTargets" id="ENSG00000167716"/>
<dbReference type="Orphanet" id="1766">
    <property type="disease" value="Dysequilibrium syndrome"/>
</dbReference>
<dbReference type="PharmGKB" id="PA142670584"/>
<dbReference type="VEuPathDB" id="HostDB:ENSG00000167716"/>
<dbReference type="eggNOG" id="KOG1786">
    <property type="taxonomic scope" value="Eukaryota"/>
</dbReference>
<dbReference type="eggNOG" id="KOG4190">
    <property type="taxonomic scope" value="Eukaryota"/>
</dbReference>
<dbReference type="GeneTree" id="ENSGT00930000151039"/>
<dbReference type="HOGENOM" id="CLU_011738_0_0_1"/>
<dbReference type="InParanoid" id="Q562E7"/>
<dbReference type="OMA" id="AYEQFTP"/>
<dbReference type="OrthoDB" id="29306at2759"/>
<dbReference type="PAN-GO" id="Q562E7">
    <property type="GO annotations" value="4 GO annotations based on evolutionary models"/>
</dbReference>
<dbReference type="PhylomeDB" id="Q562E7"/>
<dbReference type="TreeFam" id="TF323353"/>
<dbReference type="PathwayCommons" id="Q562E7"/>
<dbReference type="Reactome" id="R-HSA-9013148">
    <property type="pathway name" value="CDC42 GTPase cycle"/>
</dbReference>
<dbReference type="SignaLink" id="Q562E7"/>
<dbReference type="BioGRID-ORCS" id="124997">
    <property type="hits" value="33 hits in 1175 CRISPR screens"/>
</dbReference>
<dbReference type="ChiTaRS" id="WDR81">
    <property type="organism name" value="human"/>
</dbReference>
<dbReference type="GenomeRNAi" id="124997"/>
<dbReference type="Pharos" id="Q562E7">
    <property type="development level" value="Tbio"/>
</dbReference>
<dbReference type="PRO" id="PR:Q562E7"/>
<dbReference type="Proteomes" id="UP000005640">
    <property type="component" value="Chromosome 17"/>
</dbReference>
<dbReference type="RNAct" id="Q562E7">
    <property type="molecule type" value="protein"/>
</dbReference>
<dbReference type="Bgee" id="ENSG00000167716">
    <property type="expression patterns" value="Expressed in granulocyte and 97 other cell types or tissues"/>
</dbReference>
<dbReference type="ExpressionAtlas" id="Q562E7">
    <property type="expression patterns" value="baseline and differential"/>
</dbReference>
<dbReference type="GO" id="GO:0000421">
    <property type="term" value="C:autophagosome membrane"/>
    <property type="evidence" value="ECO:0000314"/>
    <property type="project" value="UniProtKB"/>
</dbReference>
<dbReference type="GO" id="GO:0005829">
    <property type="term" value="C:cytosol"/>
    <property type="evidence" value="ECO:0000314"/>
    <property type="project" value="UniProtKB"/>
</dbReference>
<dbReference type="GO" id="GO:0031901">
    <property type="term" value="C:early endosome membrane"/>
    <property type="evidence" value="ECO:0000314"/>
    <property type="project" value="UniProtKB"/>
</dbReference>
<dbReference type="GO" id="GO:0010008">
    <property type="term" value="C:endosome membrane"/>
    <property type="evidence" value="ECO:0000314"/>
    <property type="project" value="UniProtKB"/>
</dbReference>
<dbReference type="GO" id="GO:0031902">
    <property type="term" value="C:late endosome membrane"/>
    <property type="evidence" value="ECO:0000314"/>
    <property type="project" value="UniProtKB"/>
</dbReference>
<dbReference type="GO" id="GO:0005765">
    <property type="term" value="C:lysosomal membrane"/>
    <property type="evidence" value="ECO:0000314"/>
    <property type="project" value="UniProtKB"/>
</dbReference>
<dbReference type="GO" id="GO:0005739">
    <property type="term" value="C:mitochondrion"/>
    <property type="evidence" value="ECO:0000314"/>
    <property type="project" value="UniProtKB"/>
</dbReference>
<dbReference type="GO" id="GO:0070530">
    <property type="term" value="F:K63-linked polyubiquitin modification-dependent protein binding"/>
    <property type="evidence" value="ECO:0000314"/>
    <property type="project" value="UniProtKB"/>
</dbReference>
<dbReference type="GO" id="GO:0141039">
    <property type="term" value="F:phosphatidylinositol 3-kinase inhibitor activity"/>
    <property type="evidence" value="ECO:0000315"/>
    <property type="project" value="UniProtKB"/>
</dbReference>
<dbReference type="GO" id="GO:0035014">
    <property type="term" value="F:phosphatidylinositol 3-kinase regulator activity"/>
    <property type="evidence" value="ECO:0000318"/>
    <property type="project" value="GO_Central"/>
</dbReference>
<dbReference type="GO" id="GO:0035973">
    <property type="term" value="P:aggrephagy"/>
    <property type="evidence" value="ECO:0000315"/>
    <property type="project" value="UniProtKB"/>
</dbReference>
<dbReference type="GO" id="GO:0045022">
    <property type="term" value="P:early endosome to late endosome transport"/>
    <property type="evidence" value="ECO:0000315"/>
    <property type="project" value="UniProtKB"/>
</dbReference>
<dbReference type="GO" id="GO:0007005">
    <property type="term" value="P:mitochondrion organization"/>
    <property type="evidence" value="ECO:0000250"/>
    <property type="project" value="UniProtKB"/>
</dbReference>
<dbReference type="GO" id="GO:0050821">
    <property type="term" value="P:protein stabilization"/>
    <property type="evidence" value="ECO:0000315"/>
    <property type="project" value="UniProtKB"/>
</dbReference>
<dbReference type="GO" id="GO:0006511">
    <property type="term" value="P:ubiquitin-dependent protein catabolic process"/>
    <property type="evidence" value="ECO:0000315"/>
    <property type="project" value="UniProtKB"/>
</dbReference>
<dbReference type="CDD" id="cd06071">
    <property type="entry name" value="Beach"/>
    <property type="match status" value="1"/>
</dbReference>
<dbReference type="FunFam" id="1.10.1540.10:FF:000003">
    <property type="entry name" value="WD repeat-containing protein 81 isoform X1"/>
    <property type="match status" value="1"/>
</dbReference>
<dbReference type="FunFam" id="2.130.10.10:FF:000341">
    <property type="entry name" value="WD repeat-containing protein 81 isoform X1"/>
    <property type="match status" value="1"/>
</dbReference>
<dbReference type="FunFam" id="2.130.10.10:FF:000355">
    <property type="entry name" value="WD repeat-containing protein 81 isoform X1"/>
    <property type="match status" value="1"/>
</dbReference>
<dbReference type="Gene3D" id="1.10.1540.10">
    <property type="entry name" value="BEACH domain"/>
    <property type="match status" value="1"/>
</dbReference>
<dbReference type="Gene3D" id="2.130.10.10">
    <property type="entry name" value="YVTN repeat-like/Quinoprotein amine dehydrogenase"/>
    <property type="match status" value="2"/>
</dbReference>
<dbReference type="InterPro" id="IPR000409">
    <property type="entry name" value="BEACH_dom"/>
</dbReference>
<dbReference type="InterPro" id="IPR036372">
    <property type="entry name" value="BEACH_dom_sf"/>
</dbReference>
<dbReference type="InterPro" id="IPR011009">
    <property type="entry name" value="Kinase-like_dom_sf"/>
</dbReference>
<dbReference type="InterPro" id="IPR015943">
    <property type="entry name" value="WD40/YVTN_repeat-like_dom_sf"/>
</dbReference>
<dbReference type="InterPro" id="IPR036322">
    <property type="entry name" value="WD40_repeat_dom_sf"/>
</dbReference>
<dbReference type="InterPro" id="IPR001680">
    <property type="entry name" value="WD40_rpt"/>
</dbReference>
<dbReference type="InterPro" id="IPR052651">
    <property type="entry name" value="WDR81"/>
</dbReference>
<dbReference type="PANTHER" id="PTHR44662">
    <property type="entry name" value="WD REPEAT-CONTAINING PROTEIN 81"/>
    <property type="match status" value="1"/>
</dbReference>
<dbReference type="PANTHER" id="PTHR44662:SF1">
    <property type="entry name" value="WD REPEAT-CONTAINING PROTEIN 81"/>
    <property type="match status" value="1"/>
</dbReference>
<dbReference type="Pfam" id="PF02138">
    <property type="entry name" value="Beach"/>
    <property type="match status" value="1"/>
</dbReference>
<dbReference type="Pfam" id="PF00400">
    <property type="entry name" value="WD40"/>
    <property type="match status" value="1"/>
</dbReference>
<dbReference type="SMART" id="SM01026">
    <property type="entry name" value="Beach"/>
    <property type="match status" value="1"/>
</dbReference>
<dbReference type="SMART" id="SM00320">
    <property type="entry name" value="WD40"/>
    <property type="match status" value="6"/>
</dbReference>
<dbReference type="SUPFAM" id="SSF81837">
    <property type="entry name" value="BEACH domain"/>
    <property type="match status" value="1"/>
</dbReference>
<dbReference type="SUPFAM" id="SSF56112">
    <property type="entry name" value="Protein kinase-like (PK-like)"/>
    <property type="match status" value="1"/>
</dbReference>
<dbReference type="SUPFAM" id="SSF50978">
    <property type="entry name" value="WD40 repeat-like"/>
    <property type="match status" value="1"/>
</dbReference>
<dbReference type="PROSITE" id="PS50197">
    <property type="entry name" value="BEACH"/>
    <property type="match status" value="1"/>
</dbReference>
<dbReference type="PROSITE" id="PS50082">
    <property type="entry name" value="WD_REPEATS_2"/>
    <property type="match status" value="1"/>
</dbReference>
<dbReference type="PROSITE" id="PS50294">
    <property type="entry name" value="WD_REPEATS_REGION"/>
    <property type="match status" value="1"/>
</dbReference>
<keyword id="KW-0025">Alternative splicing</keyword>
<keyword id="KW-0963">Cytoplasm</keyword>
<keyword id="KW-0968">Cytoplasmic vesicle</keyword>
<keyword id="KW-0225">Disease variant</keyword>
<keyword id="KW-0967">Endosome</keyword>
<keyword id="KW-0991">Intellectual disability</keyword>
<keyword id="KW-0458">Lysosome</keyword>
<keyword id="KW-0472">Membrane</keyword>
<keyword id="KW-0496">Mitochondrion</keyword>
<keyword id="KW-1267">Proteomics identification</keyword>
<keyword id="KW-1185">Reference proteome</keyword>
<keyword id="KW-0677">Repeat</keyword>
<keyword id="KW-0809">Transit peptide</keyword>
<keyword id="KW-0853">WD repeat</keyword>
<proteinExistence type="evidence at protein level"/>
<gene>
    <name evidence="14" type="primary">WDR81</name>
</gene>
<feature type="chain" id="PRO_0000247244" description="WD repeat-containing protein 81">
    <location>
        <begin position="1"/>
        <end position="1941"/>
    </location>
</feature>
<feature type="domain" description="BEACH" evidence="2">
    <location>
        <begin position="337"/>
        <end position="614"/>
    </location>
</feature>
<feature type="repeat" description="WD 1">
    <location>
        <begin position="1639"/>
        <end position="1677"/>
    </location>
</feature>
<feature type="repeat" description="WD 2">
    <location>
        <begin position="1686"/>
        <end position="1724"/>
    </location>
</feature>
<feature type="repeat" description="WD 3">
    <location>
        <begin position="1729"/>
        <end position="1769"/>
    </location>
</feature>
<feature type="repeat" description="WD 4">
    <location>
        <begin position="1777"/>
        <end position="1815"/>
    </location>
</feature>
<feature type="repeat" description="WD 5">
    <location>
        <begin position="1819"/>
        <end position="1856"/>
    </location>
</feature>
<feature type="repeat" description="WD 6">
    <location>
        <begin position="1860"/>
        <end position="1896"/>
    </location>
</feature>
<feature type="repeat" description="WD 7">
    <location>
        <begin position="1902"/>
        <end position="1941"/>
    </location>
</feature>
<feature type="region of interest" description="Necessary and sufficient for the interaction with SQSTM1" evidence="9">
    <location>
        <begin position="1"/>
        <end position="650"/>
    </location>
</feature>
<feature type="region of interest" description="Disordered" evidence="3">
    <location>
        <begin position="1"/>
        <end position="27"/>
    </location>
</feature>
<feature type="region of interest" description="Disordered" evidence="3">
    <location>
        <begin position="618"/>
        <end position="637"/>
    </location>
</feature>
<feature type="region of interest" description="Disordered" evidence="3">
    <location>
        <begin position="694"/>
        <end position="718"/>
    </location>
</feature>
<feature type="region of interest" description="Disordered" evidence="3">
    <location>
        <begin position="1022"/>
        <end position="1074"/>
    </location>
</feature>
<feature type="region of interest" description="Disordered" evidence="3">
    <location>
        <begin position="1097"/>
        <end position="1217"/>
    </location>
</feature>
<feature type="region of interest" description="Disordered" evidence="3">
    <location>
        <begin position="1523"/>
        <end position="1556"/>
    </location>
</feature>
<feature type="region of interest" description="Disordered" evidence="3">
    <location>
        <begin position="1569"/>
        <end position="1602"/>
    </location>
</feature>
<feature type="compositionally biased region" description="Polar residues" evidence="3">
    <location>
        <begin position="1137"/>
        <end position="1146"/>
    </location>
</feature>
<feature type="compositionally biased region" description="Acidic residues" evidence="3">
    <location>
        <begin position="1151"/>
        <end position="1174"/>
    </location>
</feature>
<feature type="compositionally biased region" description="Gly residues" evidence="3">
    <location>
        <begin position="1586"/>
        <end position="1595"/>
    </location>
</feature>
<feature type="splice variant" id="VSP_044063" description="In isoform 6." evidence="13">
    <location>
        <begin position="1"/>
        <end position="1227"/>
    </location>
</feature>
<feature type="splice variant" id="VSP_044064" description="In isoform 5." evidence="11">
    <location>
        <begin position="1"/>
        <end position="1203"/>
    </location>
</feature>
<feature type="splice variant" id="VSP_044065" description="In isoform 2 and isoform 3." evidence="11 12">
    <location>
        <begin position="1"/>
        <end position="1051"/>
    </location>
</feature>
<feature type="splice variant" id="VSP_019955" description="In isoform 2." evidence="12">
    <location>
        <begin position="1115"/>
        <end position="1312"/>
    </location>
</feature>
<feature type="splice variant" id="VSP_044066" description="In isoform 5." evidence="11">
    <original>EEEEALPEQSEGKEQKILLD</original>
    <variation>MLVRVVLSLTPSFPEPSALY</variation>
    <location>
        <begin position="1204"/>
        <end position="1223"/>
    </location>
</feature>
<feature type="splice variant" id="VSP_044067" description="In isoform 4." evidence="11">
    <original>HEFRLGGGLNPGLVRALAISPSGRSVVAGFSSGFMVLLDTRTGLVLRGWPAHEGDILQIKAVEGSVLVSSSSDHSLTVWKELEQKPTHHYKSASDPIHTFDLYGSEVVTGTVSNKIGVCSLLEPPSQATTKLSSENFRGTLTSLALLPTKRHLLLGSDNGVIRLLA</original>
    <variation>VRGVQFPEHSPGSLGTWQGGETPQKQKARMLFWGPS</variation>
    <location>
        <begin position="1776"/>
        <end position="1941"/>
    </location>
</feature>
<feature type="sequence variant" id="VAR_081120" description="In HYC3; uncertain significance; dbSNP:rs730882206." evidence="10">
    <original>G</original>
    <variation>E</variation>
    <location>
        <position position="282"/>
    </location>
</feature>
<feature type="sequence variant" id="VAR_068220" description="In CAMRQ2; dbSNP:rs587776906." evidence="5">
    <original>P</original>
    <variation>L</variation>
    <location>
        <position position="856"/>
    </location>
</feature>
<feature type="sequence variant" id="VAR_081121" description="In HYC3." evidence="10">
    <location>
        <begin position="1096"/>
        <end position="1941"/>
    </location>
</feature>
<feature type="sequence variant" id="VAR_079037" description="In CAMRQ2." evidence="6">
    <location>
        <begin position="1333"/>
        <end position="1941"/>
    </location>
</feature>
<feature type="sequence variant" id="VAR_062107" description="In dbSNP:rs3809870." evidence="4">
    <original>M</original>
    <variation>V</variation>
    <location>
        <position position="1535"/>
    </location>
</feature>
<feature type="mutagenesis site" description="Loss of interaction with MAP1LC3C; when associated with A-547." evidence="9">
    <original>W</original>
    <variation>A</variation>
    <location>
        <position position="544"/>
    </location>
</feature>
<feature type="mutagenesis site" description="Loss of interaction with MAP1LC3C; when associated with A-544." evidence="9">
    <original>L</original>
    <variation>A</variation>
    <location>
        <position position="547"/>
    </location>
</feature>
<feature type="mutagenesis site" description="Loss of interaction with MAP1LC3C; when associated with A-578 and A-581." evidence="9">
    <original>S</original>
    <variation>A</variation>
    <location>
        <position position="577"/>
    </location>
</feature>
<feature type="mutagenesis site" description="Loss of interaction with MAP1LC3C; when associated with A-577 and A-581." evidence="9">
    <original>Y</original>
    <variation>A</variation>
    <location>
        <position position="578"/>
    </location>
</feature>
<feature type="mutagenesis site" description="Loss of interaction with MAP1LC3C; when associated with A-577 and A-578." evidence="9">
    <original>V</original>
    <variation>A</variation>
    <location>
        <position position="581"/>
    </location>
</feature>
<feature type="sequence conflict" description="In Ref. 1; BAB84937." evidence="13" ref="1">
    <location>
        <position position="1033"/>
    </location>
</feature>
<feature type="sequence conflict" description="In Ref. 4; CAD39042." evidence="13" ref="4">
    <original>P</original>
    <variation>L</variation>
    <location>
        <position position="1051"/>
    </location>
</feature>
<feature type="sequence conflict" description="In Ref. 1; BAC03593." evidence="13" ref="1">
    <original>C</original>
    <variation>Y</variation>
    <location>
        <position position="1298"/>
    </location>
</feature>
<feature type="sequence conflict" description="In Ref. 1; BAB84937." evidence="13" ref="1">
    <original>P</original>
    <variation>H</variation>
    <location>
        <position position="1540"/>
    </location>
</feature>
<feature type="sequence conflict" description="In Ref. 1; BAG53978." evidence="13" ref="1">
    <original>D</original>
    <variation>G</variation>
    <location>
        <position position="1573"/>
    </location>
</feature>
<feature type="sequence conflict" description="In Ref. 1; BAG54603." evidence="13" ref="1">
    <original>A</original>
    <variation>V</variation>
    <location>
        <position position="1744"/>
    </location>
</feature>
<feature type="sequence conflict" description="In Ref. 1; BAC03593." evidence="13" ref="1">
    <original>S</original>
    <variation>T</variation>
    <location>
        <position position="1760"/>
    </location>
</feature>
<feature type="sequence conflict" description="In Ref. 1; BAC03593." evidence="13" ref="1">
    <original>H</original>
    <variation>Y</variation>
    <location>
        <position position="1776"/>
    </location>
</feature>
<accession>Q562E7</accession>
<accession>B3KW16</accession>
<accession>B3KXU1</accession>
<accession>B7Z579</accession>
<accession>E9PHG7</accession>
<accession>Q24JP6</accession>
<accession>Q8N277</accession>
<accession>Q8N3F3</accession>
<accession>Q8TEL1</accession>
<reference key="1">
    <citation type="journal article" date="2004" name="Nat. Genet.">
        <title>Complete sequencing and characterization of 21,243 full-length human cDNAs.</title>
        <authorList>
            <person name="Ota T."/>
            <person name="Suzuki Y."/>
            <person name="Nishikawa T."/>
            <person name="Otsuki T."/>
            <person name="Sugiyama T."/>
            <person name="Irie R."/>
            <person name="Wakamatsu A."/>
            <person name="Hayashi K."/>
            <person name="Sato H."/>
            <person name="Nagai K."/>
            <person name="Kimura K."/>
            <person name="Makita H."/>
            <person name="Sekine M."/>
            <person name="Obayashi M."/>
            <person name="Nishi T."/>
            <person name="Shibahara T."/>
            <person name="Tanaka T."/>
            <person name="Ishii S."/>
            <person name="Yamamoto J."/>
            <person name="Saito K."/>
            <person name="Kawai Y."/>
            <person name="Isono Y."/>
            <person name="Nakamura Y."/>
            <person name="Nagahari K."/>
            <person name="Murakami K."/>
            <person name="Yasuda T."/>
            <person name="Iwayanagi T."/>
            <person name="Wagatsuma M."/>
            <person name="Shiratori A."/>
            <person name="Sudo H."/>
            <person name="Hosoiri T."/>
            <person name="Kaku Y."/>
            <person name="Kodaira H."/>
            <person name="Kondo H."/>
            <person name="Sugawara M."/>
            <person name="Takahashi M."/>
            <person name="Kanda K."/>
            <person name="Yokoi T."/>
            <person name="Furuya T."/>
            <person name="Kikkawa E."/>
            <person name="Omura Y."/>
            <person name="Abe K."/>
            <person name="Kamihara K."/>
            <person name="Katsuta N."/>
            <person name="Sato K."/>
            <person name="Tanikawa M."/>
            <person name="Yamazaki M."/>
            <person name="Ninomiya K."/>
            <person name="Ishibashi T."/>
            <person name="Yamashita H."/>
            <person name="Murakawa K."/>
            <person name="Fujimori K."/>
            <person name="Tanai H."/>
            <person name="Kimata M."/>
            <person name="Watanabe M."/>
            <person name="Hiraoka S."/>
            <person name="Chiba Y."/>
            <person name="Ishida S."/>
            <person name="Ono Y."/>
            <person name="Takiguchi S."/>
            <person name="Watanabe S."/>
            <person name="Yosida M."/>
            <person name="Hotuta T."/>
            <person name="Kusano J."/>
            <person name="Kanehori K."/>
            <person name="Takahashi-Fujii A."/>
            <person name="Hara H."/>
            <person name="Tanase T.-O."/>
            <person name="Nomura Y."/>
            <person name="Togiya S."/>
            <person name="Komai F."/>
            <person name="Hara R."/>
            <person name="Takeuchi K."/>
            <person name="Arita M."/>
            <person name="Imose N."/>
            <person name="Musashino K."/>
            <person name="Yuuki H."/>
            <person name="Oshima A."/>
            <person name="Sasaki N."/>
            <person name="Aotsuka S."/>
            <person name="Yoshikawa Y."/>
            <person name="Matsunawa H."/>
            <person name="Ichihara T."/>
            <person name="Shiohata N."/>
            <person name="Sano S."/>
            <person name="Moriya S."/>
            <person name="Momiyama H."/>
            <person name="Satoh N."/>
            <person name="Takami S."/>
            <person name="Terashima Y."/>
            <person name="Suzuki O."/>
            <person name="Nakagawa S."/>
            <person name="Senoh A."/>
            <person name="Mizoguchi H."/>
            <person name="Goto Y."/>
            <person name="Shimizu F."/>
            <person name="Wakebe H."/>
            <person name="Hishigaki H."/>
            <person name="Watanabe T."/>
            <person name="Sugiyama A."/>
            <person name="Takemoto M."/>
            <person name="Kawakami B."/>
            <person name="Yamazaki M."/>
            <person name="Watanabe K."/>
            <person name="Kumagai A."/>
            <person name="Itakura S."/>
            <person name="Fukuzumi Y."/>
            <person name="Fujimori Y."/>
            <person name="Komiyama M."/>
            <person name="Tashiro H."/>
            <person name="Tanigami A."/>
            <person name="Fujiwara T."/>
            <person name="Ono T."/>
            <person name="Yamada K."/>
            <person name="Fujii Y."/>
            <person name="Ozaki K."/>
            <person name="Hirao M."/>
            <person name="Ohmori Y."/>
            <person name="Kawabata A."/>
            <person name="Hikiji T."/>
            <person name="Kobatake N."/>
            <person name="Inagaki H."/>
            <person name="Ikema Y."/>
            <person name="Okamoto S."/>
            <person name="Okitani R."/>
            <person name="Kawakami T."/>
            <person name="Noguchi S."/>
            <person name="Itoh T."/>
            <person name="Shigeta K."/>
            <person name="Senba T."/>
            <person name="Matsumura K."/>
            <person name="Nakajima Y."/>
            <person name="Mizuno T."/>
            <person name="Morinaga M."/>
            <person name="Sasaki M."/>
            <person name="Togashi T."/>
            <person name="Oyama M."/>
            <person name="Hata H."/>
            <person name="Watanabe M."/>
            <person name="Komatsu T."/>
            <person name="Mizushima-Sugano J."/>
            <person name="Satoh T."/>
            <person name="Shirai Y."/>
            <person name="Takahashi Y."/>
            <person name="Nakagawa K."/>
            <person name="Okumura K."/>
            <person name="Nagase T."/>
            <person name="Nomura N."/>
            <person name="Kikuchi H."/>
            <person name="Masuho Y."/>
            <person name="Yamashita R."/>
            <person name="Nakai K."/>
            <person name="Yada T."/>
            <person name="Nakamura Y."/>
            <person name="Ohara O."/>
            <person name="Isogai T."/>
            <person name="Sugano S."/>
        </authorList>
    </citation>
    <scope>NUCLEOTIDE SEQUENCE [LARGE SCALE MRNA] (ISOFORMS 3 AND 5)</scope>
    <scope>NUCLEOTIDE SEQUENCE [LARGE SCALE MRNA] OF 873-1941 (ISOFORM 4)</scope>
    <scope>VARIANT VAL-1535</scope>
    <source>
        <tissue>Mesangial cell</tissue>
        <tissue>Spleen</tissue>
        <tissue>Synovium</tissue>
        <tissue>Tongue</tissue>
    </source>
</reference>
<reference key="2">
    <citation type="journal article" date="2006" name="Nature">
        <title>DNA sequence of human chromosome 17 and analysis of rearrangement in the human lineage.</title>
        <authorList>
            <person name="Zody M.C."/>
            <person name="Garber M."/>
            <person name="Adams D.J."/>
            <person name="Sharpe T."/>
            <person name="Harrow J."/>
            <person name="Lupski J.R."/>
            <person name="Nicholson C."/>
            <person name="Searle S.M."/>
            <person name="Wilming L."/>
            <person name="Young S.K."/>
            <person name="Abouelleil A."/>
            <person name="Allen N.R."/>
            <person name="Bi W."/>
            <person name="Bloom T."/>
            <person name="Borowsky M.L."/>
            <person name="Bugalter B.E."/>
            <person name="Butler J."/>
            <person name="Chang J.L."/>
            <person name="Chen C.-K."/>
            <person name="Cook A."/>
            <person name="Corum B."/>
            <person name="Cuomo C.A."/>
            <person name="de Jong P.J."/>
            <person name="DeCaprio D."/>
            <person name="Dewar K."/>
            <person name="FitzGerald M."/>
            <person name="Gilbert J."/>
            <person name="Gibson R."/>
            <person name="Gnerre S."/>
            <person name="Goldstein S."/>
            <person name="Grafham D.V."/>
            <person name="Grocock R."/>
            <person name="Hafez N."/>
            <person name="Hagopian D.S."/>
            <person name="Hart E."/>
            <person name="Norman C.H."/>
            <person name="Humphray S."/>
            <person name="Jaffe D.B."/>
            <person name="Jones M."/>
            <person name="Kamal M."/>
            <person name="Khodiyar V.K."/>
            <person name="LaButti K."/>
            <person name="Laird G."/>
            <person name="Lehoczky J."/>
            <person name="Liu X."/>
            <person name="Lokyitsang T."/>
            <person name="Loveland J."/>
            <person name="Lui A."/>
            <person name="Macdonald P."/>
            <person name="Major J.E."/>
            <person name="Matthews L."/>
            <person name="Mauceli E."/>
            <person name="McCarroll S.A."/>
            <person name="Mihalev A.H."/>
            <person name="Mudge J."/>
            <person name="Nguyen C."/>
            <person name="Nicol R."/>
            <person name="O'Leary S.B."/>
            <person name="Osoegawa K."/>
            <person name="Schwartz D.C."/>
            <person name="Shaw-Smith C."/>
            <person name="Stankiewicz P."/>
            <person name="Steward C."/>
            <person name="Swarbreck D."/>
            <person name="Venkataraman V."/>
            <person name="Whittaker C.A."/>
            <person name="Yang X."/>
            <person name="Zimmer A.R."/>
            <person name="Bradley A."/>
            <person name="Hubbard T."/>
            <person name="Birren B.W."/>
            <person name="Rogers J."/>
            <person name="Lander E.S."/>
            <person name="Nusbaum C."/>
        </authorList>
    </citation>
    <scope>NUCLEOTIDE SEQUENCE [LARGE SCALE GENOMIC DNA]</scope>
</reference>
<reference key="3">
    <citation type="journal article" date="2004" name="Genome Res.">
        <title>The status, quality, and expansion of the NIH full-length cDNA project: the Mammalian Gene Collection (MGC).</title>
        <authorList>
            <consortium name="The MGC Project Team"/>
        </authorList>
    </citation>
    <scope>NUCLEOTIDE SEQUENCE [LARGE SCALE MRNA] (ISOFORM 2)</scope>
    <scope>NUCLEOTIDE SEQUENCE [LARGE SCALE MRNA] OF 1049-1941 (ISOFORM 3)</scope>
    <source>
        <tissue>Lymph</tissue>
    </source>
</reference>
<reference key="4">
    <citation type="journal article" date="2007" name="BMC Genomics">
        <title>The full-ORF clone resource of the German cDNA consortium.</title>
        <authorList>
            <person name="Bechtel S."/>
            <person name="Rosenfelder H."/>
            <person name="Duda A."/>
            <person name="Schmidt C.P."/>
            <person name="Ernst U."/>
            <person name="Wellenreuther R."/>
            <person name="Mehrle A."/>
            <person name="Schuster C."/>
            <person name="Bahr A."/>
            <person name="Bloecker H."/>
            <person name="Heubner D."/>
            <person name="Hoerlein A."/>
            <person name="Michel G."/>
            <person name="Wedler H."/>
            <person name="Koehrer K."/>
            <person name="Ottenwaelder B."/>
            <person name="Poustka A."/>
            <person name="Wiemann S."/>
            <person name="Schupp I."/>
        </authorList>
    </citation>
    <scope>NUCLEOTIDE SEQUENCE [LARGE SCALE MRNA] OF 1033-1941</scope>
    <source>
        <tissue>Melanoma</tissue>
    </source>
</reference>
<reference key="5">
    <citation type="journal article" date="2011" name="BMC Syst. Biol.">
        <title>Initial characterization of the human central proteome.</title>
        <authorList>
            <person name="Burkard T.R."/>
            <person name="Planyavsky M."/>
            <person name="Kaupe I."/>
            <person name="Breitwieser F.P."/>
            <person name="Buerckstuemmer T."/>
            <person name="Bennett K.L."/>
            <person name="Superti-Furga G."/>
            <person name="Colinge J."/>
        </authorList>
    </citation>
    <scope>IDENTIFICATION BY MASS SPECTROMETRY [LARGE SCALE ANALYSIS]</scope>
</reference>
<reference key="6">
    <citation type="journal article" date="2014" name="J. Proteomics">
        <title>An enzyme assisted RP-RPLC approach for in-depth analysis of human liver phosphoproteome.</title>
        <authorList>
            <person name="Bian Y."/>
            <person name="Song C."/>
            <person name="Cheng K."/>
            <person name="Dong M."/>
            <person name="Wang F."/>
            <person name="Huang J."/>
            <person name="Sun D."/>
            <person name="Wang L."/>
            <person name="Ye M."/>
            <person name="Zou H."/>
        </authorList>
    </citation>
    <scope>IDENTIFICATION BY MASS SPECTROMETRY [LARGE SCALE ANALYSIS]</scope>
    <source>
        <tissue>Liver</tissue>
    </source>
</reference>
<reference key="7">
    <citation type="journal article" date="2016" name="J. Cell Biol.">
        <title>Negative regulation of phosphatidylinositol 3-phosphate levels in early-to-late endosome conversion.</title>
        <authorList>
            <person name="Liu K."/>
            <person name="Jian Y."/>
            <person name="Sun X."/>
            <person name="Yang C."/>
            <person name="Gao Z."/>
            <person name="Zhang Z."/>
            <person name="Liu X."/>
            <person name="Li Y."/>
            <person name="Xu J."/>
            <person name="Jing Y."/>
            <person name="Mitani S."/>
            <person name="He S."/>
            <person name="Yang C."/>
        </authorList>
    </citation>
    <scope>FUNCTION</scope>
    <scope>INTERACTION WITH BECN1 AND WDR81</scope>
    <scope>SUBCELLULAR LOCATION</scope>
    <scope>TOPOLOGY</scope>
</reference>
<reference key="8">
    <citation type="journal article" date="2016" name="Traffic">
        <title>A genetic screen identifies a critical role for the WDR81-WDR91 complex in the trafficking and degradation of tetherin.</title>
        <authorList>
            <person name="Rapiteanu R."/>
            <person name="Davis L.J."/>
            <person name="Williamson J.C."/>
            <person name="Timms R.T."/>
            <person name="Paul Luzio J."/>
            <person name="Lehner P.J."/>
        </authorList>
    </citation>
    <scope>FUNCTION</scope>
    <scope>SUBCELLULAR LOCATION</scope>
    <scope>TOPOLOGY</scope>
    <scope>INTERACTION WITH WDR91</scope>
</reference>
<reference key="9">
    <citation type="journal article" date="2017" name="Ann. Neurol.">
        <title>The genetic landscape of familial congenital hydrocephalus.</title>
        <authorList>
            <person name="Shaheen R."/>
            <person name="Sebai M.A."/>
            <person name="Patel N."/>
            <person name="Ewida N."/>
            <person name="Kurdi W."/>
            <person name="Altweijri I."/>
            <person name="Sogaty S."/>
            <person name="Almardawi E."/>
            <person name="Seidahmed M.Z."/>
            <person name="Alnemri A."/>
            <person name="Madirevula S."/>
            <person name="Ibrahim N."/>
            <person name="Abdulwahab F."/>
            <person name="Hashem M."/>
            <person name="Al-Sheddi T."/>
            <person name="Alomar R."/>
            <person name="Alobeid E."/>
            <person name="Sallout B."/>
            <person name="AlBaqawi B."/>
            <person name="AlAali W."/>
            <person name="Ajaji N."/>
            <person name="Lesmana H."/>
            <person name="Hopkin R.J."/>
            <person name="Dupuis L."/>
            <person name="Mendoza-Londono R."/>
            <person name="Al Rukban H."/>
            <person name="Yoon G."/>
            <person name="Faqeih E."/>
            <person name="Alkuraya F.S."/>
        </authorList>
    </citation>
    <scope>INVOLVEMENT IN HYC3</scope>
    <scope>VARIANTS HYC3 GLU-282 AND 1096-GLN--ALA-1941 DEL</scope>
</reference>
<reference key="10">
    <citation type="journal article" date="2017" name="J. Cell Biol.">
        <title>The BEACH-containing protein WDR81 coordinates p62 and LC3C to promote aggrephagy.</title>
        <authorList>
            <person name="Liu X."/>
            <person name="Li Y."/>
            <person name="Wang X."/>
            <person name="Xing R."/>
            <person name="Liu K."/>
            <person name="Gan Q."/>
            <person name="Tang C."/>
            <person name="Gao Z."/>
            <person name="Jian Y."/>
            <person name="Luo S."/>
            <person name="Guo W."/>
            <person name="Yang C."/>
        </authorList>
    </citation>
    <scope>FUNCTION</scope>
    <scope>INTERACTION WITH MAP1LC3C AND SQSTM1</scope>
    <scope>SUBCELLULAR LOCATION</scope>
    <scope>REGION</scope>
    <scope>MUTAGENESIS OF TRP-544; LEU-547; SER-577; TYR-578 AND VAL-581</scope>
</reference>
<reference key="11">
    <citation type="journal article" date="2011" name="Genome Res.">
        <title>Homozygosity mapping and targeted genomic sequencing reveal the gene responsible for cerebellar hypoplasia and quadrupedal locomotion in a consanguineous kindred.</title>
        <authorList>
            <person name="Gulsuner S."/>
            <person name="Tekinay A.B."/>
            <person name="Doerschner K."/>
            <person name="Boyaci H."/>
            <person name="Bilguvar K."/>
            <person name="Unal H."/>
            <person name="Ors A."/>
            <person name="Onat O.E."/>
            <person name="Atalar E."/>
            <person name="Basak A.N."/>
            <person name="Topaloglu H."/>
            <person name="Kansu T."/>
            <person name="Tan M."/>
            <person name="Tan U."/>
            <person name="Gunel M."/>
            <person name="Ozcelik T."/>
        </authorList>
    </citation>
    <scope>VARIANT CAMRQ2 LEU-856</scope>
    <scope>TISSUE SPECIFICITY</scope>
</reference>
<reference key="12">
    <citation type="journal article" date="2016" name="Am. J. Med. Genet. A">
        <title>Clinical and molecular delineation of dysequilibrium syndrome type 2 and profound sensorineural hearing loss in an inbred Arab family.</title>
        <authorList>
            <person name="Komara M."/>
            <person name="John A."/>
            <person name="Suleiman J."/>
            <person name="Ali B.R."/>
            <person name="Al-Gazali L."/>
        </authorList>
    </citation>
    <scope>VARIANT CAMRQ2 1333-ARG--ALA-1941 DEL</scope>
</reference>